<feature type="chain" id="PRO_1000201407" description="Elongation factor Tu">
    <location>
        <begin position="1"/>
        <end position="396"/>
    </location>
</feature>
<feature type="domain" description="tr-type G">
    <location>
        <begin position="10"/>
        <end position="205"/>
    </location>
</feature>
<feature type="region of interest" description="G1" evidence="1">
    <location>
        <begin position="19"/>
        <end position="26"/>
    </location>
</feature>
<feature type="region of interest" description="G2" evidence="1">
    <location>
        <begin position="62"/>
        <end position="66"/>
    </location>
</feature>
<feature type="region of interest" description="G3" evidence="1">
    <location>
        <begin position="83"/>
        <end position="86"/>
    </location>
</feature>
<feature type="region of interest" description="G4" evidence="1">
    <location>
        <begin position="138"/>
        <end position="141"/>
    </location>
</feature>
<feature type="region of interest" description="G5" evidence="1">
    <location>
        <begin position="175"/>
        <end position="177"/>
    </location>
</feature>
<feature type="binding site" evidence="2">
    <location>
        <begin position="19"/>
        <end position="26"/>
    </location>
    <ligand>
        <name>GTP</name>
        <dbReference type="ChEBI" id="CHEBI:37565"/>
    </ligand>
</feature>
<feature type="binding site" evidence="2">
    <location>
        <position position="26"/>
    </location>
    <ligand>
        <name>Mg(2+)</name>
        <dbReference type="ChEBI" id="CHEBI:18420"/>
    </ligand>
</feature>
<feature type="binding site" evidence="2">
    <location>
        <begin position="83"/>
        <end position="87"/>
    </location>
    <ligand>
        <name>GTP</name>
        <dbReference type="ChEBI" id="CHEBI:37565"/>
    </ligand>
</feature>
<feature type="binding site" evidence="2">
    <location>
        <begin position="138"/>
        <end position="141"/>
    </location>
    <ligand>
        <name>GTP</name>
        <dbReference type="ChEBI" id="CHEBI:37565"/>
    </ligand>
</feature>
<name>EFTU_MYCBT</name>
<sequence>MAKAKFQRTKPHVNIGTIGHVDHGKTTLTAAITKVLHDKFPDLNETKAFDQIDNAPEERQRGITINIAHVEYQTDKRHYAHVDAPGHADYIKNMITGAAQMDGAILVVAATDGPMPQTREHVLLARQVGVPYILVALNKADAVDDEELLELVEMEVRELLAAQEFDEDAPVVRVSALKALEGDAKWVASVEELMNAVDESIPDPVRETDKPFLMPVEDVFTITGRGTVVTGRVERGVINVNEEVEIVGIRPSTTKTTVTGVEMFRKLLDQGQAGDNVGLLLRGVKREDVERGQVVTKPGTTTPHTEFEGQVYILSKDEGGRHTPFFNNYRPQFYFRTTDVTGVVTLPEGTEMVMPGDNTNISVKLIQPVAMDEGLRFAIREGGRTVGAGRVTKIIK</sequence>
<gene>
    <name evidence="2" type="primary">tuf</name>
    <name type="ordered locus">JTY_0704</name>
</gene>
<dbReference type="EC" id="3.6.5.3" evidence="2"/>
<dbReference type="EMBL" id="AP010918">
    <property type="protein sequence ID" value="BAH24997.1"/>
    <property type="molecule type" value="Genomic_DNA"/>
</dbReference>
<dbReference type="RefSeq" id="WP_003403463.1">
    <property type="nucleotide sequence ID" value="NZ_CP014566.1"/>
</dbReference>
<dbReference type="SMR" id="C1AL18"/>
<dbReference type="GeneID" id="45424647"/>
<dbReference type="KEGG" id="mbt:JTY_0704"/>
<dbReference type="HOGENOM" id="CLU_007265_0_1_11"/>
<dbReference type="GO" id="GO:0005829">
    <property type="term" value="C:cytosol"/>
    <property type="evidence" value="ECO:0007669"/>
    <property type="project" value="TreeGrafter"/>
</dbReference>
<dbReference type="GO" id="GO:0005525">
    <property type="term" value="F:GTP binding"/>
    <property type="evidence" value="ECO:0007669"/>
    <property type="project" value="UniProtKB-UniRule"/>
</dbReference>
<dbReference type="GO" id="GO:0003924">
    <property type="term" value="F:GTPase activity"/>
    <property type="evidence" value="ECO:0007669"/>
    <property type="project" value="InterPro"/>
</dbReference>
<dbReference type="GO" id="GO:0003746">
    <property type="term" value="F:translation elongation factor activity"/>
    <property type="evidence" value="ECO:0007669"/>
    <property type="project" value="UniProtKB-UniRule"/>
</dbReference>
<dbReference type="CDD" id="cd01884">
    <property type="entry name" value="EF_Tu"/>
    <property type="match status" value="1"/>
</dbReference>
<dbReference type="CDD" id="cd03697">
    <property type="entry name" value="EFTU_II"/>
    <property type="match status" value="1"/>
</dbReference>
<dbReference type="CDD" id="cd03707">
    <property type="entry name" value="EFTU_III"/>
    <property type="match status" value="1"/>
</dbReference>
<dbReference type="FunFam" id="2.40.30.10:FF:000001">
    <property type="entry name" value="Elongation factor Tu"/>
    <property type="match status" value="1"/>
</dbReference>
<dbReference type="FunFam" id="3.40.50.300:FF:000003">
    <property type="entry name" value="Elongation factor Tu"/>
    <property type="match status" value="1"/>
</dbReference>
<dbReference type="Gene3D" id="3.40.50.300">
    <property type="entry name" value="P-loop containing nucleotide triphosphate hydrolases"/>
    <property type="match status" value="1"/>
</dbReference>
<dbReference type="Gene3D" id="2.40.30.10">
    <property type="entry name" value="Translation factors"/>
    <property type="match status" value="2"/>
</dbReference>
<dbReference type="HAMAP" id="MF_00118_B">
    <property type="entry name" value="EF_Tu_B"/>
    <property type="match status" value="1"/>
</dbReference>
<dbReference type="InterPro" id="IPR041709">
    <property type="entry name" value="EF-Tu_GTP-bd"/>
</dbReference>
<dbReference type="InterPro" id="IPR050055">
    <property type="entry name" value="EF-Tu_GTPase"/>
</dbReference>
<dbReference type="InterPro" id="IPR004161">
    <property type="entry name" value="EFTu-like_2"/>
</dbReference>
<dbReference type="InterPro" id="IPR033720">
    <property type="entry name" value="EFTU_2"/>
</dbReference>
<dbReference type="InterPro" id="IPR031157">
    <property type="entry name" value="G_TR_CS"/>
</dbReference>
<dbReference type="InterPro" id="IPR027417">
    <property type="entry name" value="P-loop_NTPase"/>
</dbReference>
<dbReference type="InterPro" id="IPR005225">
    <property type="entry name" value="Small_GTP-bd"/>
</dbReference>
<dbReference type="InterPro" id="IPR000795">
    <property type="entry name" value="T_Tr_GTP-bd_dom"/>
</dbReference>
<dbReference type="InterPro" id="IPR009000">
    <property type="entry name" value="Transl_B-barrel_sf"/>
</dbReference>
<dbReference type="InterPro" id="IPR009001">
    <property type="entry name" value="Transl_elong_EF1A/Init_IF2_C"/>
</dbReference>
<dbReference type="InterPro" id="IPR004541">
    <property type="entry name" value="Transl_elong_EFTu/EF1A_bac/org"/>
</dbReference>
<dbReference type="InterPro" id="IPR004160">
    <property type="entry name" value="Transl_elong_EFTu/EF1A_C"/>
</dbReference>
<dbReference type="NCBIfam" id="TIGR00485">
    <property type="entry name" value="EF-Tu"/>
    <property type="match status" value="1"/>
</dbReference>
<dbReference type="NCBIfam" id="NF000766">
    <property type="entry name" value="PRK00049.1"/>
    <property type="match status" value="1"/>
</dbReference>
<dbReference type="NCBIfam" id="NF009372">
    <property type="entry name" value="PRK12735.1"/>
    <property type="match status" value="1"/>
</dbReference>
<dbReference type="NCBIfam" id="NF009373">
    <property type="entry name" value="PRK12736.1"/>
    <property type="match status" value="1"/>
</dbReference>
<dbReference type="NCBIfam" id="TIGR00231">
    <property type="entry name" value="small_GTP"/>
    <property type="match status" value="1"/>
</dbReference>
<dbReference type="PANTHER" id="PTHR43721:SF22">
    <property type="entry name" value="ELONGATION FACTOR TU, MITOCHONDRIAL"/>
    <property type="match status" value="1"/>
</dbReference>
<dbReference type="PANTHER" id="PTHR43721">
    <property type="entry name" value="ELONGATION FACTOR TU-RELATED"/>
    <property type="match status" value="1"/>
</dbReference>
<dbReference type="Pfam" id="PF00009">
    <property type="entry name" value="GTP_EFTU"/>
    <property type="match status" value="1"/>
</dbReference>
<dbReference type="Pfam" id="PF03144">
    <property type="entry name" value="GTP_EFTU_D2"/>
    <property type="match status" value="1"/>
</dbReference>
<dbReference type="Pfam" id="PF03143">
    <property type="entry name" value="GTP_EFTU_D3"/>
    <property type="match status" value="1"/>
</dbReference>
<dbReference type="PRINTS" id="PR00315">
    <property type="entry name" value="ELONGATNFCT"/>
</dbReference>
<dbReference type="SUPFAM" id="SSF50465">
    <property type="entry name" value="EF-Tu/eEF-1alpha/eIF2-gamma C-terminal domain"/>
    <property type="match status" value="1"/>
</dbReference>
<dbReference type="SUPFAM" id="SSF52540">
    <property type="entry name" value="P-loop containing nucleoside triphosphate hydrolases"/>
    <property type="match status" value="1"/>
</dbReference>
<dbReference type="SUPFAM" id="SSF50447">
    <property type="entry name" value="Translation proteins"/>
    <property type="match status" value="1"/>
</dbReference>
<dbReference type="PROSITE" id="PS00301">
    <property type="entry name" value="G_TR_1"/>
    <property type="match status" value="1"/>
</dbReference>
<dbReference type="PROSITE" id="PS51722">
    <property type="entry name" value="G_TR_2"/>
    <property type="match status" value="1"/>
</dbReference>
<comment type="function">
    <text evidence="2">GTP hydrolase that promotes the GTP-dependent binding of aminoacyl-tRNA to the A-site of ribosomes during protein biosynthesis.</text>
</comment>
<comment type="catalytic activity">
    <reaction evidence="2">
        <text>GTP + H2O = GDP + phosphate + H(+)</text>
        <dbReference type="Rhea" id="RHEA:19669"/>
        <dbReference type="ChEBI" id="CHEBI:15377"/>
        <dbReference type="ChEBI" id="CHEBI:15378"/>
        <dbReference type="ChEBI" id="CHEBI:37565"/>
        <dbReference type="ChEBI" id="CHEBI:43474"/>
        <dbReference type="ChEBI" id="CHEBI:58189"/>
        <dbReference type="EC" id="3.6.5.3"/>
    </reaction>
    <physiologicalReaction direction="left-to-right" evidence="2">
        <dbReference type="Rhea" id="RHEA:19670"/>
    </physiologicalReaction>
</comment>
<comment type="subunit">
    <text evidence="2">Monomer.</text>
</comment>
<comment type="subcellular location">
    <subcellularLocation>
        <location evidence="2">Cytoplasm</location>
    </subcellularLocation>
</comment>
<comment type="similarity">
    <text evidence="2">Belongs to the TRAFAC class translation factor GTPase superfamily. Classic translation factor GTPase family. EF-Tu/EF-1A subfamily.</text>
</comment>
<accession>C1AL18</accession>
<proteinExistence type="inferred from homology"/>
<reference key="1">
    <citation type="journal article" date="2009" name="Vaccine">
        <title>Whole genome sequence analysis of Mycobacterium bovis bacillus Calmette-Guerin (BCG) Tokyo 172: a comparative study of BCG vaccine substrains.</title>
        <authorList>
            <person name="Seki M."/>
            <person name="Honda I."/>
            <person name="Fujita I."/>
            <person name="Yano I."/>
            <person name="Yamamoto S."/>
            <person name="Koyama A."/>
        </authorList>
    </citation>
    <scope>NUCLEOTIDE SEQUENCE [LARGE SCALE GENOMIC DNA]</scope>
    <source>
        <strain>BCG / Tokyo 172 / ATCC 35737 / TMC 1019</strain>
    </source>
</reference>
<keyword id="KW-0963">Cytoplasm</keyword>
<keyword id="KW-0251">Elongation factor</keyword>
<keyword id="KW-0342">GTP-binding</keyword>
<keyword id="KW-0378">Hydrolase</keyword>
<keyword id="KW-0460">Magnesium</keyword>
<keyword id="KW-0479">Metal-binding</keyword>
<keyword id="KW-0547">Nucleotide-binding</keyword>
<keyword id="KW-0648">Protein biosynthesis</keyword>
<evidence type="ECO:0000250" key="1"/>
<evidence type="ECO:0000255" key="2">
    <source>
        <dbReference type="HAMAP-Rule" id="MF_00118"/>
    </source>
</evidence>
<organism>
    <name type="scientific">Mycobacterium bovis (strain BCG / Tokyo 172 / ATCC 35737 / TMC 1019)</name>
    <dbReference type="NCBI Taxonomy" id="561275"/>
    <lineage>
        <taxon>Bacteria</taxon>
        <taxon>Bacillati</taxon>
        <taxon>Actinomycetota</taxon>
        <taxon>Actinomycetes</taxon>
        <taxon>Mycobacteriales</taxon>
        <taxon>Mycobacteriaceae</taxon>
        <taxon>Mycobacterium</taxon>
        <taxon>Mycobacterium tuberculosis complex</taxon>
    </lineage>
</organism>
<protein>
    <recommendedName>
        <fullName evidence="2">Elongation factor Tu</fullName>
        <shortName evidence="2">EF-Tu</shortName>
        <ecNumber evidence="2">3.6.5.3</ecNumber>
    </recommendedName>
</protein>